<organism>
    <name type="scientific">Aspergillus fumigatus (strain ATCC MYA-4609 / CBS 101355 / FGSC A1100 / Af293)</name>
    <name type="common">Neosartorya fumigata</name>
    <dbReference type="NCBI Taxonomy" id="330879"/>
    <lineage>
        <taxon>Eukaryota</taxon>
        <taxon>Fungi</taxon>
        <taxon>Dikarya</taxon>
        <taxon>Ascomycota</taxon>
        <taxon>Pezizomycotina</taxon>
        <taxon>Eurotiomycetes</taxon>
        <taxon>Eurotiomycetidae</taxon>
        <taxon>Eurotiales</taxon>
        <taxon>Aspergillaceae</taxon>
        <taxon>Aspergillus</taxon>
        <taxon>Aspergillus subgen. Fumigati</taxon>
    </lineage>
</organism>
<reference key="1">
    <citation type="journal article" date="2005" name="Nature">
        <title>Genomic sequence of the pathogenic and allergenic filamentous fungus Aspergillus fumigatus.</title>
        <authorList>
            <person name="Nierman W.C."/>
            <person name="Pain A."/>
            <person name="Anderson M.J."/>
            <person name="Wortman J.R."/>
            <person name="Kim H.S."/>
            <person name="Arroyo J."/>
            <person name="Berriman M."/>
            <person name="Abe K."/>
            <person name="Archer D.B."/>
            <person name="Bermejo C."/>
            <person name="Bennett J.W."/>
            <person name="Bowyer P."/>
            <person name="Chen D."/>
            <person name="Collins M."/>
            <person name="Coulsen R."/>
            <person name="Davies R."/>
            <person name="Dyer P.S."/>
            <person name="Farman M.L."/>
            <person name="Fedorova N."/>
            <person name="Fedorova N.D."/>
            <person name="Feldblyum T.V."/>
            <person name="Fischer R."/>
            <person name="Fosker N."/>
            <person name="Fraser A."/>
            <person name="Garcia J.L."/>
            <person name="Garcia M.J."/>
            <person name="Goble A."/>
            <person name="Goldman G.H."/>
            <person name="Gomi K."/>
            <person name="Griffith-Jones S."/>
            <person name="Gwilliam R."/>
            <person name="Haas B.J."/>
            <person name="Haas H."/>
            <person name="Harris D.E."/>
            <person name="Horiuchi H."/>
            <person name="Huang J."/>
            <person name="Humphray S."/>
            <person name="Jimenez J."/>
            <person name="Keller N."/>
            <person name="Khouri H."/>
            <person name="Kitamoto K."/>
            <person name="Kobayashi T."/>
            <person name="Konzack S."/>
            <person name="Kulkarni R."/>
            <person name="Kumagai T."/>
            <person name="Lafton A."/>
            <person name="Latge J.-P."/>
            <person name="Li W."/>
            <person name="Lord A."/>
            <person name="Lu C."/>
            <person name="Majoros W.H."/>
            <person name="May G.S."/>
            <person name="Miller B.L."/>
            <person name="Mohamoud Y."/>
            <person name="Molina M."/>
            <person name="Monod M."/>
            <person name="Mouyna I."/>
            <person name="Mulligan S."/>
            <person name="Murphy L.D."/>
            <person name="O'Neil S."/>
            <person name="Paulsen I."/>
            <person name="Penalva M.A."/>
            <person name="Pertea M."/>
            <person name="Price C."/>
            <person name="Pritchard B.L."/>
            <person name="Quail M.A."/>
            <person name="Rabbinowitsch E."/>
            <person name="Rawlins N."/>
            <person name="Rajandream M.A."/>
            <person name="Reichard U."/>
            <person name="Renauld H."/>
            <person name="Robson G.D."/>
            <person name="Rodriguez de Cordoba S."/>
            <person name="Rodriguez-Pena J.M."/>
            <person name="Ronning C.M."/>
            <person name="Rutter S."/>
            <person name="Salzberg S.L."/>
            <person name="Sanchez M."/>
            <person name="Sanchez-Ferrero J.C."/>
            <person name="Saunders D."/>
            <person name="Seeger K."/>
            <person name="Squares R."/>
            <person name="Squares S."/>
            <person name="Takeuchi M."/>
            <person name="Tekaia F."/>
            <person name="Turner G."/>
            <person name="Vazquez de Aldana C.R."/>
            <person name="Weidman J."/>
            <person name="White O."/>
            <person name="Woodward J.R."/>
            <person name="Yu J.-H."/>
            <person name="Fraser C.M."/>
            <person name="Galagan J.E."/>
            <person name="Asai K."/>
            <person name="Machida M."/>
            <person name="Hall N."/>
            <person name="Barrell B.G."/>
            <person name="Denning D.W."/>
        </authorList>
    </citation>
    <scope>NUCLEOTIDE SEQUENCE [LARGE SCALE GENOMIC DNA]</scope>
    <source>
        <strain>ATCC MYA-4609 / CBS 101355 / FGSC A1100 / Af293</strain>
    </source>
</reference>
<proteinExistence type="inferred from homology"/>
<sequence>MENTRVFVSGLPPTFTNDQLRMHFSSRFQITDAHVLPKRRIGFVGFKSSEAAQQAASYFNKTYVKMSKISVEIAKPIDSEPVKKAEKHRKGSTSNDSTAGKALKRKRDGDNTQKDPQLQEYLSVIERPSKTKTWANGDDFLNTIQNQPATSELREEQRDDTSEKVEEHSHKQRKKPRVDDVPKAAHDREPEPMVLDKTEEEHERANADGQVEAIPPTQEEAEPVSDADWLRSKTSRLLGLLDEDEQAEFDSTAQRKPDPSSEPETVSKAGAQHSDDDKAAVESSVEEEEVDTNIEHIRLSSRLFVRNLPYDASESDLEPVFSKFGKIEEIHVAFDTRSTTSKGFAYVQYIEPDAAVQAYKELDGKHFQGRLMHILPATAKKTYKIDEHELSKLPLKKQKQIKRKLEASSSTFSWNSLYMNTDAVMSSVAERLGVSKADLLDPTSADAAVKQAHAETHVIQETKAYFTANGVNLDAFKQRERGNTAILVKNFSYGVKVDDLRKLFEPYGQITRLLMPPSGTIAIVEFARPDEAQKAFKGLAYRKVGDSILFLEKAPANLFDATTAPQTSVLETKAVSQGFSTADTFAAEDGDEPVVTSTLFVKNLNFSTTNERFTEVFKPLDGFVSARIKTKPDPKRPGKTLSMGFGFVDFRTKAQAQAALAAMDGYKLDQHELVVRASNKAMDAAEERRREDTAKKIAARRTKIIIKNLPFQATKKDVRSLFGAYGQLRSVRVPKKFDRSARGFGFADFVSAREAENAMDALKNTHLLGRRLVLEFANEEAVDPEQEIEQIEKKVGEQLDRVKLQKLTGTGRKKFTVGAQEDEEA</sequence>
<keyword id="KW-0539">Nucleus</keyword>
<keyword id="KW-1185">Reference proteome</keyword>
<keyword id="KW-0677">Repeat</keyword>
<keyword id="KW-0687">Ribonucleoprotein</keyword>
<keyword id="KW-0694">RNA-binding</keyword>
<keyword id="KW-0698">rRNA processing</keyword>
<gene>
    <name type="primary">mrd1</name>
    <name type="ORF">AFUA_1G04840</name>
</gene>
<feature type="chain" id="PRO_0000081637" description="Multiple RNA-binding domain-containing protein 1">
    <location>
        <begin position="1"/>
        <end position="825"/>
    </location>
</feature>
<feature type="domain" description="RRM 1" evidence="2">
    <location>
        <begin position="4"/>
        <end position="76"/>
    </location>
</feature>
<feature type="domain" description="RRM 2" evidence="2">
    <location>
        <begin position="301"/>
        <end position="379"/>
    </location>
</feature>
<feature type="domain" description="RRM 3" evidence="2">
    <location>
        <begin position="484"/>
        <end position="556"/>
    </location>
</feature>
<feature type="domain" description="RRM 4" evidence="2">
    <location>
        <begin position="597"/>
        <end position="680"/>
    </location>
</feature>
<feature type="domain" description="RRM 5" evidence="2">
    <location>
        <begin position="702"/>
        <end position="779"/>
    </location>
</feature>
<feature type="region of interest" description="Disordered" evidence="3">
    <location>
        <begin position="80"/>
        <end position="289"/>
    </location>
</feature>
<feature type="compositionally biased region" description="Basic and acidic residues" evidence="3">
    <location>
        <begin position="152"/>
        <end position="169"/>
    </location>
</feature>
<feature type="compositionally biased region" description="Basic and acidic residues" evidence="3">
    <location>
        <begin position="177"/>
        <end position="206"/>
    </location>
</feature>
<dbReference type="EMBL" id="AAHF01000007">
    <property type="protein sequence ID" value="EAL88195.1"/>
    <property type="molecule type" value="Genomic_DNA"/>
</dbReference>
<dbReference type="RefSeq" id="XP_750233.1">
    <property type="nucleotide sequence ID" value="XM_745140.1"/>
</dbReference>
<dbReference type="SMR" id="Q4WJT7"/>
<dbReference type="FunCoup" id="Q4WJT7">
    <property type="interactions" value="1138"/>
</dbReference>
<dbReference type="STRING" id="330879.Q4WJT7"/>
<dbReference type="EnsemblFungi" id="EAL88195">
    <property type="protein sequence ID" value="EAL88195"/>
    <property type="gene ID" value="AFUA_1G04840"/>
</dbReference>
<dbReference type="GeneID" id="3507335"/>
<dbReference type="KEGG" id="afm:AFUA_1G04840"/>
<dbReference type="VEuPathDB" id="FungiDB:Afu1g04840"/>
<dbReference type="eggNOG" id="KOG0110">
    <property type="taxonomic scope" value="Eukaryota"/>
</dbReference>
<dbReference type="HOGENOM" id="CLU_008479_0_0_1"/>
<dbReference type="InParanoid" id="Q4WJT7"/>
<dbReference type="OMA" id="FNNTCIQ"/>
<dbReference type="OrthoDB" id="439639at2759"/>
<dbReference type="Proteomes" id="UP000002530">
    <property type="component" value="Chromosome 1"/>
</dbReference>
<dbReference type="GO" id="GO:0030686">
    <property type="term" value="C:90S preribosome"/>
    <property type="evidence" value="ECO:0007669"/>
    <property type="project" value="EnsemblFungi"/>
</dbReference>
<dbReference type="GO" id="GO:0005737">
    <property type="term" value="C:cytoplasm"/>
    <property type="evidence" value="ECO:0000318"/>
    <property type="project" value="GO_Central"/>
</dbReference>
<dbReference type="GO" id="GO:0005730">
    <property type="term" value="C:nucleolus"/>
    <property type="evidence" value="ECO:0007669"/>
    <property type="project" value="EnsemblFungi"/>
</dbReference>
<dbReference type="GO" id="GO:0005634">
    <property type="term" value="C:nucleus"/>
    <property type="evidence" value="ECO:0000318"/>
    <property type="project" value="GO_Central"/>
</dbReference>
<dbReference type="GO" id="GO:1990904">
    <property type="term" value="C:ribonucleoprotein complex"/>
    <property type="evidence" value="ECO:0000318"/>
    <property type="project" value="GO_Central"/>
</dbReference>
<dbReference type="GO" id="GO:0032040">
    <property type="term" value="C:small-subunit processome"/>
    <property type="evidence" value="ECO:0007669"/>
    <property type="project" value="EnsemblFungi"/>
</dbReference>
<dbReference type="GO" id="GO:0003729">
    <property type="term" value="F:mRNA binding"/>
    <property type="evidence" value="ECO:0000318"/>
    <property type="project" value="GO_Central"/>
</dbReference>
<dbReference type="GO" id="GO:0042134">
    <property type="term" value="F:rRNA primary transcript binding"/>
    <property type="evidence" value="ECO:0007669"/>
    <property type="project" value="EnsemblFungi"/>
</dbReference>
<dbReference type="GO" id="GO:0000480">
    <property type="term" value="P:endonucleolytic cleavage in 5'-ETS of tricistronic rRNA transcript (SSU-rRNA, 5.8S rRNA, LSU-rRNA)"/>
    <property type="evidence" value="ECO:0007669"/>
    <property type="project" value="EnsemblFungi"/>
</dbReference>
<dbReference type="GO" id="GO:0000447">
    <property type="term" value="P:endonucleolytic cleavage in ITS1 to separate SSU-rRNA from 5.8S rRNA and LSU-rRNA from tricistronic rRNA transcript (SSU-rRNA, 5.8S rRNA, LSU-rRNA)"/>
    <property type="evidence" value="ECO:0007669"/>
    <property type="project" value="EnsemblFungi"/>
</dbReference>
<dbReference type="GO" id="GO:0000472">
    <property type="term" value="P:endonucleolytic cleavage to generate mature 5'-end of SSU-rRNA from (SSU-rRNA, 5.8S rRNA, LSU-rRNA)"/>
    <property type="evidence" value="ECO:0007669"/>
    <property type="project" value="EnsemblFungi"/>
</dbReference>
<dbReference type="GO" id="GO:0034462">
    <property type="term" value="P:small-subunit processome assembly"/>
    <property type="evidence" value="ECO:0007669"/>
    <property type="project" value="EnsemblFungi"/>
</dbReference>
<dbReference type="CDD" id="cd12566">
    <property type="entry name" value="RRM2_MRD1"/>
    <property type="match status" value="1"/>
</dbReference>
<dbReference type="CDD" id="cd12568">
    <property type="entry name" value="RRM3_MRD1"/>
    <property type="match status" value="1"/>
</dbReference>
<dbReference type="CDD" id="cd12570">
    <property type="entry name" value="RRM5_MRD1"/>
    <property type="match status" value="1"/>
</dbReference>
<dbReference type="FunFam" id="3.30.70.330:FF:000247">
    <property type="entry name" value="Multiple RNA-binding domain-containing protein 1"/>
    <property type="match status" value="1"/>
</dbReference>
<dbReference type="FunFam" id="3.30.70.330:FF:000452">
    <property type="entry name" value="Multiple RNA-binding domain-containing protein 1"/>
    <property type="match status" value="1"/>
</dbReference>
<dbReference type="FunFam" id="3.30.70.330:FF:000459">
    <property type="entry name" value="Multiple RNA-binding domain-containing protein 1"/>
    <property type="match status" value="1"/>
</dbReference>
<dbReference type="FunFam" id="3.30.70.330:FF:000839">
    <property type="entry name" value="Multiple RNA-binding domain-containing protein 1"/>
    <property type="match status" value="1"/>
</dbReference>
<dbReference type="FunFam" id="3.30.70.330:FF:001137">
    <property type="entry name" value="Multiple RNA-binding domain-containing protein 1"/>
    <property type="match status" value="1"/>
</dbReference>
<dbReference type="Gene3D" id="3.30.70.330">
    <property type="match status" value="5"/>
</dbReference>
<dbReference type="InterPro" id="IPR050502">
    <property type="entry name" value="Euk_RNA-bind_prot"/>
</dbReference>
<dbReference type="InterPro" id="IPR034482">
    <property type="entry name" value="Mrd1_RRM3"/>
</dbReference>
<dbReference type="InterPro" id="IPR012677">
    <property type="entry name" value="Nucleotide-bd_a/b_plait_sf"/>
</dbReference>
<dbReference type="InterPro" id="IPR035979">
    <property type="entry name" value="RBD_domain_sf"/>
</dbReference>
<dbReference type="InterPro" id="IPR000504">
    <property type="entry name" value="RRM_dom"/>
</dbReference>
<dbReference type="InterPro" id="IPR003954">
    <property type="entry name" value="RRM_dom_euk"/>
</dbReference>
<dbReference type="PANTHER" id="PTHR48025">
    <property type="entry name" value="OS02G0815200 PROTEIN"/>
    <property type="match status" value="1"/>
</dbReference>
<dbReference type="PANTHER" id="PTHR48025:SF1">
    <property type="entry name" value="RRM DOMAIN-CONTAINING PROTEIN"/>
    <property type="match status" value="1"/>
</dbReference>
<dbReference type="Pfam" id="PF00076">
    <property type="entry name" value="RRM_1"/>
    <property type="match status" value="5"/>
</dbReference>
<dbReference type="SMART" id="SM00360">
    <property type="entry name" value="RRM"/>
    <property type="match status" value="5"/>
</dbReference>
<dbReference type="SMART" id="SM00361">
    <property type="entry name" value="RRM_1"/>
    <property type="match status" value="1"/>
</dbReference>
<dbReference type="SUPFAM" id="SSF54928">
    <property type="entry name" value="RNA-binding domain, RBD"/>
    <property type="match status" value="3"/>
</dbReference>
<dbReference type="PROSITE" id="PS50102">
    <property type="entry name" value="RRM"/>
    <property type="match status" value="5"/>
</dbReference>
<comment type="function">
    <text evidence="1">Involved in pre-rRNA processing.</text>
</comment>
<comment type="subcellular location">
    <subcellularLocation>
        <location evidence="1">Nucleus</location>
    </subcellularLocation>
</comment>
<comment type="similarity">
    <text evidence="4">Belongs to the RRM MRD1 family.</text>
</comment>
<name>MRD1_ASPFU</name>
<accession>Q4WJT7</accession>
<evidence type="ECO:0000250" key="1"/>
<evidence type="ECO:0000255" key="2">
    <source>
        <dbReference type="PROSITE-ProRule" id="PRU00176"/>
    </source>
</evidence>
<evidence type="ECO:0000256" key="3">
    <source>
        <dbReference type="SAM" id="MobiDB-lite"/>
    </source>
</evidence>
<evidence type="ECO:0000305" key="4"/>
<protein>
    <recommendedName>
        <fullName>Multiple RNA-binding domain-containing protein 1</fullName>
    </recommendedName>
</protein>